<reference key="1">
    <citation type="journal article" date="2007" name="Mol. Genet. Genomics">
        <title>Chloroplast genomes of the diatoms Phaeodactylum tricornutum and Thalassiosira pseudonana: comparison with other plastid genomes of the red lineage.</title>
        <authorList>
            <person name="Oudot-Le Secq M.-P."/>
            <person name="Grimwood J."/>
            <person name="Shapiro H."/>
            <person name="Armbrust E.V."/>
            <person name="Bowler C."/>
            <person name="Green B.R."/>
        </authorList>
    </citation>
    <scope>NUCLEOTIDE SEQUENCE [LARGE SCALE GENOMIC DNA]</scope>
    <source>
        <strain>CCMP1335 / NEPCC58 / CCAP 1085/12</strain>
    </source>
</reference>
<organism>
    <name type="scientific">Thalassiosira pseudonana</name>
    <name type="common">Marine diatom</name>
    <name type="synonym">Cyclotella nana</name>
    <dbReference type="NCBI Taxonomy" id="35128"/>
    <lineage>
        <taxon>Eukaryota</taxon>
        <taxon>Sar</taxon>
        <taxon>Stramenopiles</taxon>
        <taxon>Ochrophyta</taxon>
        <taxon>Bacillariophyta</taxon>
        <taxon>Coscinodiscophyceae</taxon>
        <taxon>Thalassiosirophycidae</taxon>
        <taxon>Thalassiosirales</taxon>
        <taxon>Thalassiosiraceae</taxon>
        <taxon>Thalassiosira</taxon>
    </lineage>
</organism>
<comment type="function">
    <text evidence="1">One of the primary rRNA binding proteins, it binds directly to 16S rRNA central domain where it helps coordinate assembly of the platform of the 30S subunit.</text>
</comment>
<comment type="subunit">
    <text evidence="1">Part of the 30S ribosomal subunit.</text>
</comment>
<comment type="subcellular location">
    <subcellularLocation>
        <location>Plastid</location>
        <location>Chloroplast</location>
    </subcellularLocation>
</comment>
<comment type="similarity">
    <text evidence="2">Belongs to the universal ribosomal protein uS8 family.</text>
</comment>
<proteinExistence type="inferred from homology"/>
<protein>
    <recommendedName>
        <fullName evidence="2">Small ribosomal subunit protein uS8c</fullName>
    </recommendedName>
    <alternativeName>
        <fullName>30S ribosomal protein S8, chloroplastic</fullName>
    </alternativeName>
</protein>
<evidence type="ECO:0000250" key="1"/>
<evidence type="ECO:0000305" key="2"/>
<geneLocation type="chloroplast"/>
<keyword id="KW-0150">Chloroplast</keyword>
<keyword id="KW-0934">Plastid</keyword>
<keyword id="KW-0687">Ribonucleoprotein</keyword>
<keyword id="KW-0689">Ribosomal protein</keyword>
<keyword id="KW-0694">RNA-binding</keyword>
<keyword id="KW-0699">rRNA-binding</keyword>
<gene>
    <name type="primary">rps8</name>
</gene>
<sequence>MVTDNIADMLTRIRNANMVKHEIVEIPGTKMSKAIAEILKEEGFIENFETYTENSNQYLLLSLKYEGQSRERIINKIERVSKPGLRVYANSKTLPLVLNGLGIAIISTSKGVMTNRKAKSLGIGGEVLCYIW</sequence>
<accession>A0T0Y6</accession>
<feature type="chain" id="PRO_0000276737" description="Small ribosomal subunit protein uS8c">
    <location>
        <begin position="1"/>
        <end position="132"/>
    </location>
</feature>
<dbReference type="EMBL" id="EF067921">
    <property type="protein sequence ID" value="ABK20821.1"/>
    <property type="molecule type" value="Genomic_DNA"/>
</dbReference>
<dbReference type="RefSeq" id="YP_874598.1">
    <property type="nucleotide sequence ID" value="NC_008589.1"/>
</dbReference>
<dbReference type="SMR" id="A0T0Y6"/>
<dbReference type="STRING" id="35128.A0T0Y6"/>
<dbReference type="GeneID" id="4524761"/>
<dbReference type="InParanoid" id="A0T0Y6"/>
<dbReference type="GO" id="GO:0009507">
    <property type="term" value="C:chloroplast"/>
    <property type="evidence" value="ECO:0007669"/>
    <property type="project" value="UniProtKB-SubCell"/>
</dbReference>
<dbReference type="GO" id="GO:1990904">
    <property type="term" value="C:ribonucleoprotein complex"/>
    <property type="evidence" value="ECO:0007669"/>
    <property type="project" value="UniProtKB-KW"/>
</dbReference>
<dbReference type="GO" id="GO:0005840">
    <property type="term" value="C:ribosome"/>
    <property type="evidence" value="ECO:0007669"/>
    <property type="project" value="UniProtKB-KW"/>
</dbReference>
<dbReference type="GO" id="GO:0019843">
    <property type="term" value="F:rRNA binding"/>
    <property type="evidence" value="ECO:0007669"/>
    <property type="project" value="UniProtKB-UniRule"/>
</dbReference>
<dbReference type="GO" id="GO:0003735">
    <property type="term" value="F:structural constituent of ribosome"/>
    <property type="evidence" value="ECO:0000318"/>
    <property type="project" value="GO_Central"/>
</dbReference>
<dbReference type="GO" id="GO:0006412">
    <property type="term" value="P:translation"/>
    <property type="evidence" value="ECO:0007669"/>
    <property type="project" value="UniProtKB-UniRule"/>
</dbReference>
<dbReference type="FunFam" id="3.30.1370.30:FF:000002">
    <property type="entry name" value="30S ribosomal protein S8"/>
    <property type="match status" value="1"/>
</dbReference>
<dbReference type="FunFam" id="3.30.1490.10:FF:000001">
    <property type="entry name" value="30S ribosomal protein S8"/>
    <property type="match status" value="1"/>
</dbReference>
<dbReference type="Gene3D" id="3.30.1370.30">
    <property type="match status" value="1"/>
</dbReference>
<dbReference type="Gene3D" id="3.30.1490.10">
    <property type="match status" value="1"/>
</dbReference>
<dbReference type="HAMAP" id="MF_01302_B">
    <property type="entry name" value="Ribosomal_uS8_B"/>
    <property type="match status" value="1"/>
</dbReference>
<dbReference type="InterPro" id="IPR000630">
    <property type="entry name" value="Ribosomal_uS8"/>
</dbReference>
<dbReference type="InterPro" id="IPR047863">
    <property type="entry name" value="Ribosomal_uS8_CS"/>
</dbReference>
<dbReference type="InterPro" id="IPR035987">
    <property type="entry name" value="Ribosomal_uS8_sf"/>
</dbReference>
<dbReference type="NCBIfam" id="NF001109">
    <property type="entry name" value="PRK00136.1"/>
    <property type="match status" value="1"/>
</dbReference>
<dbReference type="PANTHER" id="PTHR11758">
    <property type="entry name" value="40S RIBOSOMAL PROTEIN S15A"/>
    <property type="match status" value="1"/>
</dbReference>
<dbReference type="Pfam" id="PF00410">
    <property type="entry name" value="Ribosomal_S8"/>
    <property type="match status" value="1"/>
</dbReference>
<dbReference type="SUPFAM" id="SSF56047">
    <property type="entry name" value="Ribosomal protein S8"/>
    <property type="match status" value="1"/>
</dbReference>
<dbReference type="PROSITE" id="PS00053">
    <property type="entry name" value="RIBOSOMAL_S8"/>
    <property type="match status" value="1"/>
</dbReference>
<name>RR8_THAPS</name>